<gene>
    <name evidence="1" type="primary">atpD</name>
    <name type="ordered locus">jk1335</name>
</gene>
<reference key="1">
    <citation type="journal article" date="2005" name="J. Bacteriol.">
        <title>Complete genome sequence and analysis of the multiresistant nosocomial pathogen Corynebacterium jeikeium K411, a lipid-requiring bacterium of the human skin flora.</title>
        <authorList>
            <person name="Tauch A."/>
            <person name="Kaiser O."/>
            <person name="Hain T."/>
            <person name="Goesmann A."/>
            <person name="Weisshaar B."/>
            <person name="Albersmeier A."/>
            <person name="Bekel T."/>
            <person name="Bischoff N."/>
            <person name="Brune I."/>
            <person name="Chakraborty T."/>
            <person name="Kalinowski J."/>
            <person name="Meyer F."/>
            <person name="Rupp O."/>
            <person name="Schneiker S."/>
            <person name="Viehoever P."/>
            <person name="Puehler A."/>
        </authorList>
    </citation>
    <scope>NUCLEOTIDE SEQUENCE [LARGE SCALE GENOMIC DNA]</scope>
    <source>
        <strain>K411</strain>
    </source>
</reference>
<name>ATPB_CORJK</name>
<feature type="chain" id="PRO_0000254246" description="ATP synthase subunit beta">
    <location>
        <begin position="1"/>
        <end position="481"/>
    </location>
</feature>
<feature type="binding site" evidence="1">
    <location>
        <begin position="167"/>
        <end position="174"/>
    </location>
    <ligand>
        <name>ATP</name>
        <dbReference type="ChEBI" id="CHEBI:30616"/>
    </ligand>
</feature>
<proteinExistence type="inferred from homology"/>
<dbReference type="EC" id="7.1.2.2" evidence="1"/>
<dbReference type="EMBL" id="CR931997">
    <property type="protein sequence ID" value="CAI37507.1"/>
    <property type="molecule type" value="Genomic_DNA"/>
</dbReference>
<dbReference type="RefSeq" id="WP_005292972.1">
    <property type="nucleotide sequence ID" value="NC_007164.1"/>
</dbReference>
<dbReference type="SMR" id="Q4JUK0"/>
<dbReference type="STRING" id="306537.jk1335"/>
<dbReference type="GeneID" id="92738916"/>
<dbReference type="KEGG" id="cjk:jk1335"/>
<dbReference type="eggNOG" id="COG0055">
    <property type="taxonomic scope" value="Bacteria"/>
</dbReference>
<dbReference type="HOGENOM" id="CLU_022398_0_2_11"/>
<dbReference type="OrthoDB" id="9801639at2"/>
<dbReference type="Proteomes" id="UP000000545">
    <property type="component" value="Chromosome"/>
</dbReference>
<dbReference type="GO" id="GO:0005886">
    <property type="term" value="C:plasma membrane"/>
    <property type="evidence" value="ECO:0007669"/>
    <property type="project" value="UniProtKB-SubCell"/>
</dbReference>
<dbReference type="GO" id="GO:0045259">
    <property type="term" value="C:proton-transporting ATP synthase complex"/>
    <property type="evidence" value="ECO:0007669"/>
    <property type="project" value="UniProtKB-KW"/>
</dbReference>
<dbReference type="GO" id="GO:0005524">
    <property type="term" value="F:ATP binding"/>
    <property type="evidence" value="ECO:0007669"/>
    <property type="project" value="UniProtKB-UniRule"/>
</dbReference>
<dbReference type="GO" id="GO:0016887">
    <property type="term" value="F:ATP hydrolysis activity"/>
    <property type="evidence" value="ECO:0007669"/>
    <property type="project" value="InterPro"/>
</dbReference>
<dbReference type="GO" id="GO:0046933">
    <property type="term" value="F:proton-transporting ATP synthase activity, rotational mechanism"/>
    <property type="evidence" value="ECO:0007669"/>
    <property type="project" value="UniProtKB-UniRule"/>
</dbReference>
<dbReference type="CDD" id="cd18110">
    <property type="entry name" value="ATP-synt_F1_beta_C"/>
    <property type="match status" value="1"/>
</dbReference>
<dbReference type="CDD" id="cd18115">
    <property type="entry name" value="ATP-synt_F1_beta_N"/>
    <property type="match status" value="1"/>
</dbReference>
<dbReference type="CDD" id="cd01133">
    <property type="entry name" value="F1-ATPase_beta_CD"/>
    <property type="match status" value="1"/>
</dbReference>
<dbReference type="FunFam" id="1.10.1140.10:FF:000005">
    <property type="entry name" value="ATP synthase subunit beta"/>
    <property type="match status" value="1"/>
</dbReference>
<dbReference type="FunFam" id="2.40.10.170:FF:000005">
    <property type="entry name" value="ATP synthase subunit beta"/>
    <property type="match status" value="1"/>
</dbReference>
<dbReference type="FunFam" id="3.40.50.300:FF:000004">
    <property type="entry name" value="ATP synthase subunit beta"/>
    <property type="match status" value="1"/>
</dbReference>
<dbReference type="Gene3D" id="2.40.10.170">
    <property type="match status" value="1"/>
</dbReference>
<dbReference type="Gene3D" id="1.10.1140.10">
    <property type="entry name" value="Bovine Mitochondrial F1-atpase, Atp Synthase Beta Chain, Chain D, domain 3"/>
    <property type="match status" value="1"/>
</dbReference>
<dbReference type="Gene3D" id="3.40.50.300">
    <property type="entry name" value="P-loop containing nucleotide triphosphate hydrolases"/>
    <property type="match status" value="1"/>
</dbReference>
<dbReference type="HAMAP" id="MF_01347">
    <property type="entry name" value="ATP_synth_beta_bact"/>
    <property type="match status" value="1"/>
</dbReference>
<dbReference type="InterPro" id="IPR003593">
    <property type="entry name" value="AAA+_ATPase"/>
</dbReference>
<dbReference type="InterPro" id="IPR055190">
    <property type="entry name" value="ATP-synt_VA_C"/>
</dbReference>
<dbReference type="InterPro" id="IPR005722">
    <property type="entry name" value="ATP_synth_F1_bsu"/>
</dbReference>
<dbReference type="InterPro" id="IPR020003">
    <property type="entry name" value="ATPase_a/bsu_AS"/>
</dbReference>
<dbReference type="InterPro" id="IPR050053">
    <property type="entry name" value="ATPase_alpha/beta_chains"/>
</dbReference>
<dbReference type="InterPro" id="IPR004100">
    <property type="entry name" value="ATPase_F1/V1/A1_a/bsu_N"/>
</dbReference>
<dbReference type="InterPro" id="IPR036121">
    <property type="entry name" value="ATPase_F1/V1/A1_a/bsu_N_sf"/>
</dbReference>
<dbReference type="InterPro" id="IPR000194">
    <property type="entry name" value="ATPase_F1/V1/A1_a/bsu_nucl-bd"/>
</dbReference>
<dbReference type="InterPro" id="IPR024034">
    <property type="entry name" value="ATPase_F1/V1_b/a_C"/>
</dbReference>
<dbReference type="InterPro" id="IPR027417">
    <property type="entry name" value="P-loop_NTPase"/>
</dbReference>
<dbReference type="NCBIfam" id="TIGR01039">
    <property type="entry name" value="atpD"/>
    <property type="match status" value="1"/>
</dbReference>
<dbReference type="PANTHER" id="PTHR15184">
    <property type="entry name" value="ATP SYNTHASE"/>
    <property type="match status" value="1"/>
</dbReference>
<dbReference type="PANTHER" id="PTHR15184:SF71">
    <property type="entry name" value="ATP SYNTHASE SUBUNIT BETA, MITOCHONDRIAL"/>
    <property type="match status" value="1"/>
</dbReference>
<dbReference type="Pfam" id="PF00006">
    <property type="entry name" value="ATP-synt_ab"/>
    <property type="match status" value="1"/>
</dbReference>
<dbReference type="Pfam" id="PF02874">
    <property type="entry name" value="ATP-synt_ab_N"/>
    <property type="match status" value="1"/>
</dbReference>
<dbReference type="Pfam" id="PF22919">
    <property type="entry name" value="ATP-synt_VA_C"/>
    <property type="match status" value="1"/>
</dbReference>
<dbReference type="SMART" id="SM00382">
    <property type="entry name" value="AAA"/>
    <property type="match status" value="1"/>
</dbReference>
<dbReference type="SUPFAM" id="SSF47917">
    <property type="entry name" value="C-terminal domain of alpha and beta subunits of F1 ATP synthase"/>
    <property type="match status" value="1"/>
</dbReference>
<dbReference type="SUPFAM" id="SSF50615">
    <property type="entry name" value="N-terminal domain of alpha and beta subunits of F1 ATP synthase"/>
    <property type="match status" value="1"/>
</dbReference>
<dbReference type="SUPFAM" id="SSF52540">
    <property type="entry name" value="P-loop containing nucleoside triphosphate hydrolases"/>
    <property type="match status" value="1"/>
</dbReference>
<dbReference type="PROSITE" id="PS00152">
    <property type="entry name" value="ATPASE_ALPHA_BETA"/>
    <property type="match status" value="1"/>
</dbReference>
<organism>
    <name type="scientific">Corynebacterium jeikeium (strain K411)</name>
    <dbReference type="NCBI Taxonomy" id="306537"/>
    <lineage>
        <taxon>Bacteria</taxon>
        <taxon>Bacillati</taxon>
        <taxon>Actinomycetota</taxon>
        <taxon>Actinomycetes</taxon>
        <taxon>Mycobacteriales</taxon>
        <taxon>Corynebacteriaceae</taxon>
        <taxon>Corynebacterium</taxon>
    </lineage>
</organism>
<keyword id="KW-0066">ATP synthesis</keyword>
<keyword id="KW-0067">ATP-binding</keyword>
<keyword id="KW-1003">Cell membrane</keyword>
<keyword id="KW-0139">CF(1)</keyword>
<keyword id="KW-0375">Hydrogen ion transport</keyword>
<keyword id="KW-0406">Ion transport</keyword>
<keyword id="KW-0472">Membrane</keyword>
<keyword id="KW-0547">Nucleotide-binding</keyword>
<keyword id="KW-1185">Reference proteome</keyword>
<keyword id="KW-1278">Translocase</keyword>
<keyword id="KW-0813">Transport</keyword>
<evidence type="ECO:0000255" key="1">
    <source>
        <dbReference type="HAMAP-Rule" id="MF_01347"/>
    </source>
</evidence>
<protein>
    <recommendedName>
        <fullName evidence="1">ATP synthase subunit beta</fullName>
        <ecNumber evidence="1">7.1.2.2</ecNumber>
    </recommendedName>
    <alternativeName>
        <fullName evidence="1">ATP synthase F1 sector subunit beta</fullName>
    </alternativeName>
    <alternativeName>
        <fullName evidence="1">F-ATPase subunit beta</fullName>
    </alternativeName>
</protein>
<accession>Q4JUK0</accession>
<sequence>MTTANQVQPSAESAVAGRVVRVIGPVVDVEFPRGQQPALFNALTVEVDLEAVAKTITLEVAQHLGDNLVRAVSMAPTDGLIRGAEVTDTGKPISVPVGDVVKGHVFNALGDCLDEPGLGRDGEQWGIHREPPAFDQLEGKTEILETGIKVIDLLTPYVKGGKIGLFGGAGVGKTVLIQEMITRIAREFSGTSVFAGVGERTREGTDLFLEMEEMGVLQDTALVFGQMDEPPGVRMRVALSGLTMAEYFRDVQNQDVLLFIDNIFRFTQAGSEVSTLLGRMPSAVGYQPTLADEMGVLQERITSTKGRSITSLQAVYVPADDYTDPAPATTFAHLDATTELDRSIASKGIYPAVNPLTSTSRILEPGIVGERHYEVAQRVIHILQKNKELQDIIAILGMDELSEEDKITVQRARRLERFLGQNFFVAEKFTGIPGSYVPLADTIDAFERICDGEFDAYPEQAFNGLGGLDDVEAAYKKMTEK</sequence>
<comment type="function">
    <text evidence="1">Produces ATP from ADP in the presence of a proton gradient across the membrane. The catalytic sites are hosted primarily by the beta subunits.</text>
</comment>
<comment type="catalytic activity">
    <reaction evidence="1">
        <text>ATP + H2O + 4 H(+)(in) = ADP + phosphate + 5 H(+)(out)</text>
        <dbReference type="Rhea" id="RHEA:57720"/>
        <dbReference type="ChEBI" id="CHEBI:15377"/>
        <dbReference type="ChEBI" id="CHEBI:15378"/>
        <dbReference type="ChEBI" id="CHEBI:30616"/>
        <dbReference type="ChEBI" id="CHEBI:43474"/>
        <dbReference type="ChEBI" id="CHEBI:456216"/>
        <dbReference type="EC" id="7.1.2.2"/>
    </reaction>
</comment>
<comment type="subunit">
    <text evidence="1">F-type ATPases have 2 components, CF(1) - the catalytic core - and CF(0) - the membrane proton channel. CF(1) has five subunits: alpha(3), beta(3), gamma(1), delta(1), epsilon(1). CF(0) has three main subunits: a(1), b(2) and c(9-12). The alpha and beta chains form an alternating ring which encloses part of the gamma chain. CF(1) is attached to CF(0) by a central stalk formed by the gamma and epsilon chains, while a peripheral stalk is formed by the delta and b chains.</text>
</comment>
<comment type="subcellular location">
    <subcellularLocation>
        <location evidence="1">Cell membrane</location>
        <topology evidence="1">Peripheral membrane protein</topology>
    </subcellularLocation>
</comment>
<comment type="similarity">
    <text evidence="1">Belongs to the ATPase alpha/beta chains family.</text>
</comment>